<gene>
    <name type="primary">ndh-1</name>
    <name type="synonym">ND1</name>
    <name type="ORF">NCU16018</name>
</gene>
<feature type="chain" id="PRO_0000117436" description="NADH-ubiquinone oxidoreductase chain 1">
    <location>
        <begin position="1"/>
        <end position="371"/>
    </location>
</feature>
<feature type="transmembrane region" description="Helical" evidence="2">
    <location>
        <begin position="7"/>
        <end position="27"/>
    </location>
</feature>
<feature type="transmembrane region" description="Helical" evidence="2">
    <location>
        <begin position="44"/>
        <end position="64"/>
    </location>
</feature>
<feature type="transmembrane region" description="Helical" evidence="2">
    <location>
        <begin position="77"/>
        <end position="97"/>
    </location>
</feature>
<feature type="transmembrane region" description="Helical" evidence="2">
    <location>
        <begin position="109"/>
        <end position="129"/>
    </location>
</feature>
<feature type="transmembrane region" description="Helical" evidence="2">
    <location>
        <begin position="153"/>
        <end position="173"/>
    </location>
</feature>
<feature type="transmembrane region" description="Helical" evidence="2">
    <location>
        <begin position="180"/>
        <end position="200"/>
    </location>
</feature>
<feature type="transmembrane region" description="Helical" evidence="2">
    <location>
        <begin position="226"/>
        <end position="246"/>
    </location>
</feature>
<feature type="transmembrane region" description="Helical" evidence="2">
    <location>
        <begin position="263"/>
        <end position="283"/>
    </location>
</feature>
<feature type="transmembrane region" description="Helical" evidence="2">
    <location>
        <begin position="302"/>
        <end position="322"/>
    </location>
</feature>
<feature type="transmembrane region" description="Helical" evidence="2">
    <location>
        <begin position="338"/>
        <end position="358"/>
    </location>
</feature>
<sequence length="371" mass="41552">MFYSLTIISILEVLLVLVPSLLAVAYVTVAERKTMASMQRRLGPNAVGYLGLLQAFADALKLLLKEYVALTQANMTLFFLGPVITLIFSLLGYAVIPYGPSLVIQDVNLGILYMLAVSSLATYGILLAGWSANSKYAFLGSLRSAAQLISYELVLSSAILLVIMLTGSFNLGVNTESQRAVLFVLPLLPIFIIFFIGSIAETNRAPFDLAEAESELVSGFMTEHAAVVFVFFFLAEYGSIVLMCILTSILFLGGYLFINLKDVFNILDFVYSNLFIFEINWMVSERSYTEDFFNNYKSILEGWLYGWIIGLKSSIMIFIFILGRASFPRIRYDQLMGFCWTVLLPIIFALIILVPCILESFYILPWNLNLF</sequence>
<proteinExistence type="inferred from homology"/>
<geneLocation type="mitochondrion"/>
<keyword id="KW-0249">Electron transport</keyword>
<keyword id="KW-0472">Membrane</keyword>
<keyword id="KW-0496">Mitochondrion</keyword>
<keyword id="KW-0999">Mitochondrion inner membrane</keyword>
<keyword id="KW-0520">NAD</keyword>
<keyword id="KW-1185">Reference proteome</keyword>
<keyword id="KW-0679">Respiratory chain</keyword>
<keyword id="KW-1278">Translocase</keyword>
<keyword id="KW-0812">Transmembrane</keyword>
<keyword id="KW-1133">Transmembrane helix</keyword>
<keyword id="KW-0813">Transport</keyword>
<keyword id="KW-0830">Ubiquinone</keyword>
<accession>P08774</accession>
<accession>M1R9S5</accession>
<accession>Q5F0G6</accession>
<reference key="1">
    <citation type="journal article" date="1985" name="J. Mol. Biol.">
        <title>The mitochondrial URF1 gene in Neurospora crassa has an intron that contains a novel type of URF.</title>
        <authorList>
            <person name="Burger G."/>
            <person name="Werner S."/>
        </authorList>
    </citation>
    <scope>NUCLEOTIDE SEQUENCE [GENOMIC DNA]</scope>
</reference>
<reference key="2">
    <citation type="journal article" date="2005" name="Fungal Genet. Biol.">
        <title>Intramolecular recombination and deletions in mitochondrial DNA of senescent, a nuclear-gene mutant of Neurospora crassa exhibiting 'death' phenotype.</title>
        <authorList>
            <person name="D'Souza A.D."/>
            <person name="Bertrand H."/>
            <person name="Maheshwari R."/>
        </authorList>
    </citation>
    <scope>NUCLEOTIDE SEQUENCE [GENOMIC DNA]</scope>
</reference>
<reference key="3">
    <citation type="journal article" date="2003" name="Nature">
        <title>The genome sequence of the filamentous fungus Neurospora crassa.</title>
        <authorList>
            <person name="Galagan J.E."/>
            <person name="Calvo S.E."/>
            <person name="Borkovich K.A."/>
            <person name="Selker E.U."/>
            <person name="Read N.D."/>
            <person name="Jaffe D.B."/>
            <person name="FitzHugh W."/>
            <person name="Ma L.-J."/>
            <person name="Smirnov S."/>
            <person name="Purcell S."/>
            <person name="Rehman B."/>
            <person name="Elkins T."/>
            <person name="Engels R."/>
            <person name="Wang S."/>
            <person name="Nielsen C.B."/>
            <person name="Butler J."/>
            <person name="Endrizzi M."/>
            <person name="Qui D."/>
            <person name="Ianakiev P."/>
            <person name="Bell-Pedersen D."/>
            <person name="Nelson M.A."/>
            <person name="Werner-Washburne M."/>
            <person name="Selitrennikoff C.P."/>
            <person name="Kinsey J.A."/>
            <person name="Braun E.L."/>
            <person name="Zelter A."/>
            <person name="Schulte U."/>
            <person name="Kothe G.O."/>
            <person name="Jedd G."/>
            <person name="Mewes H.-W."/>
            <person name="Staben C."/>
            <person name="Marcotte E."/>
            <person name="Greenberg D."/>
            <person name="Roy A."/>
            <person name="Foley K."/>
            <person name="Naylor J."/>
            <person name="Stange-Thomann N."/>
            <person name="Barrett R."/>
            <person name="Gnerre S."/>
            <person name="Kamal M."/>
            <person name="Kamvysselis M."/>
            <person name="Mauceli E.W."/>
            <person name="Bielke C."/>
            <person name="Rudd S."/>
            <person name="Frishman D."/>
            <person name="Krystofova S."/>
            <person name="Rasmussen C."/>
            <person name="Metzenberg R.L."/>
            <person name="Perkins D.D."/>
            <person name="Kroken S."/>
            <person name="Cogoni C."/>
            <person name="Macino G."/>
            <person name="Catcheside D.E.A."/>
            <person name="Li W."/>
            <person name="Pratt R.J."/>
            <person name="Osmani S.A."/>
            <person name="DeSouza C.P.C."/>
            <person name="Glass N.L."/>
            <person name="Orbach M.J."/>
            <person name="Berglund J.A."/>
            <person name="Voelker R."/>
            <person name="Yarden O."/>
            <person name="Plamann M."/>
            <person name="Seiler S."/>
            <person name="Dunlap J.C."/>
            <person name="Radford A."/>
            <person name="Aramayo R."/>
            <person name="Natvig D.O."/>
            <person name="Alex L.A."/>
            <person name="Mannhaupt G."/>
            <person name="Ebbole D.J."/>
            <person name="Freitag M."/>
            <person name="Paulsen I."/>
            <person name="Sachs M.S."/>
            <person name="Lander E.S."/>
            <person name="Nusbaum C."/>
            <person name="Birren B.W."/>
        </authorList>
    </citation>
    <scope>NUCLEOTIDE SEQUENCE [LARGE SCALE GENOMIC DNA]</scope>
    <source>
        <strain>ATCC 24698 / 74-OR23-1A / CBS 708.71 / DSM 1257 / FGSC 987</strain>
    </source>
</reference>
<reference key="4">
    <citation type="book" date="2004" name="The Mycota II, Genetics and Biotechnology (2nd edition)">
        <title>Mitochondrial genetics of Neurospora.</title>
        <editorList>
            <person name="Kueck U."/>
        </editorList>
        <authorList>
            <person name="Kennell J.C."/>
            <person name="Collins R.A."/>
            <person name="Griffiths A.J.F."/>
            <person name="Nargang F.E."/>
        </authorList>
    </citation>
    <scope>GENOME REANNOTATION</scope>
    <source>
        <strain>ATCC 24698 / 74-OR23-1A / CBS 708.71 / DSM 1257 / FGSC 987</strain>
    </source>
</reference>
<reference key="5">
    <citation type="journal article" date="1990" name="Genetics">
        <title>Behavior of the [mi-3] mutation and conversion of polymorphic mtDNA markers in heterokaryons of Neurospora crassa.</title>
        <authorList>
            <person name="Hawse A."/>
            <person name="Collins R.A."/>
            <person name="Nargang F.E."/>
        </authorList>
    </citation>
    <scope>NUCLEOTIDE SEQUENCE [GENOMIC DNA] OF 209-216</scope>
    <scope>CONFIRMATION OF SPLICE SITE</scope>
</reference>
<evidence type="ECO:0000250" key="1"/>
<evidence type="ECO:0000255" key="2"/>
<evidence type="ECO:0000305" key="3"/>
<organism>
    <name type="scientific">Neurospora crassa (strain ATCC 24698 / 74-OR23-1A / CBS 708.71 / DSM 1257 / FGSC 987)</name>
    <dbReference type="NCBI Taxonomy" id="367110"/>
    <lineage>
        <taxon>Eukaryota</taxon>
        <taxon>Fungi</taxon>
        <taxon>Dikarya</taxon>
        <taxon>Ascomycota</taxon>
        <taxon>Pezizomycotina</taxon>
        <taxon>Sordariomycetes</taxon>
        <taxon>Sordariomycetidae</taxon>
        <taxon>Sordariales</taxon>
        <taxon>Sordariaceae</taxon>
        <taxon>Neurospora</taxon>
    </lineage>
</organism>
<dbReference type="EC" id="7.1.1.2"/>
<dbReference type="EMBL" id="X03280">
    <property type="protein sequence ID" value="CAA27029.1"/>
    <property type="molecule type" value="Genomic_DNA"/>
</dbReference>
<dbReference type="EMBL" id="AY548155">
    <property type="protein sequence ID" value="AAT74904.1"/>
    <property type="molecule type" value="Genomic_DNA"/>
</dbReference>
<dbReference type="EMBL" id="AY548157">
    <property type="protein sequence ID" value="AAT74909.1"/>
    <property type="molecule type" value="Genomic_DNA"/>
</dbReference>
<dbReference type="EMBL" id="KC683708">
    <property type="protein sequence ID" value="AGG16007.1"/>
    <property type="status" value="ALT_SEQ"/>
    <property type="molecule type" value="Genomic_DNA"/>
</dbReference>
<dbReference type="PIR" id="A23431">
    <property type="entry name" value="A23431"/>
</dbReference>
<dbReference type="RefSeq" id="YP_009126719.1">
    <property type="nucleotide sequence ID" value="NC_026614.1"/>
</dbReference>
<dbReference type="SMR" id="P08774"/>
<dbReference type="STRING" id="367110.P08774"/>
<dbReference type="TCDB" id="3.D.1.6.2">
    <property type="family name" value="the h+ or na+-translocating nadh dehydrogenase (ndh) family"/>
</dbReference>
<dbReference type="EnsemblFungi" id="AGG16007">
    <property type="protein sequence ID" value="AGG16007"/>
    <property type="gene ID" value="NCU16018"/>
</dbReference>
<dbReference type="GeneID" id="23681573"/>
<dbReference type="KEGG" id="ncr:NCU16018"/>
<dbReference type="InParanoid" id="P08774"/>
<dbReference type="OrthoDB" id="5203521at2759"/>
<dbReference type="Proteomes" id="UP000001805">
    <property type="component" value="Mitochondrion"/>
</dbReference>
<dbReference type="GO" id="GO:0005743">
    <property type="term" value="C:mitochondrial inner membrane"/>
    <property type="evidence" value="ECO:0007669"/>
    <property type="project" value="UniProtKB-SubCell"/>
</dbReference>
<dbReference type="GO" id="GO:0045271">
    <property type="term" value="C:respiratory chain complex I"/>
    <property type="evidence" value="ECO:0000318"/>
    <property type="project" value="GO_Central"/>
</dbReference>
<dbReference type="GO" id="GO:0008137">
    <property type="term" value="F:NADH dehydrogenase (ubiquinone) activity"/>
    <property type="evidence" value="ECO:0007669"/>
    <property type="project" value="UniProtKB-EC"/>
</dbReference>
<dbReference type="GO" id="GO:0009060">
    <property type="term" value="P:aerobic respiration"/>
    <property type="evidence" value="ECO:0000318"/>
    <property type="project" value="GO_Central"/>
</dbReference>
<dbReference type="HAMAP" id="MF_01350">
    <property type="entry name" value="NDH1_NuoH"/>
    <property type="match status" value="1"/>
</dbReference>
<dbReference type="InterPro" id="IPR001694">
    <property type="entry name" value="NADH_UbQ_OxRdtase_su1/FPO"/>
</dbReference>
<dbReference type="InterPro" id="IPR018086">
    <property type="entry name" value="NADH_UbQ_OxRdtase_su1_CS"/>
</dbReference>
<dbReference type="PANTHER" id="PTHR11432">
    <property type="entry name" value="NADH DEHYDROGENASE SUBUNIT 1"/>
    <property type="match status" value="1"/>
</dbReference>
<dbReference type="PANTHER" id="PTHR11432:SF3">
    <property type="entry name" value="NADH-UBIQUINONE OXIDOREDUCTASE CHAIN 1"/>
    <property type="match status" value="1"/>
</dbReference>
<dbReference type="Pfam" id="PF00146">
    <property type="entry name" value="NADHdh"/>
    <property type="match status" value="1"/>
</dbReference>
<dbReference type="PROSITE" id="PS00667">
    <property type="entry name" value="COMPLEX1_ND1_1"/>
    <property type="match status" value="1"/>
</dbReference>
<dbReference type="PROSITE" id="PS00668">
    <property type="entry name" value="COMPLEX1_ND1_2"/>
    <property type="match status" value="1"/>
</dbReference>
<comment type="function">
    <text>Core subunit of the mitochondrial membrane respiratory chain NADH dehydrogenase (Complex I) that is believed to belong to the minimal assembly required for catalysis. Complex I functions in the transfer of electrons from NADH to the respiratory chain. The immediate electron acceptor for the enzyme is believed to be ubiquinone.</text>
</comment>
<comment type="catalytic activity">
    <reaction>
        <text>a ubiquinone + NADH + 5 H(+)(in) = a ubiquinol + NAD(+) + 4 H(+)(out)</text>
        <dbReference type="Rhea" id="RHEA:29091"/>
        <dbReference type="Rhea" id="RHEA-COMP:9565"/>
        <dbReference type="Rhea" id="RHEA-COMP:9566"/>
        <dbReference type="ChEBI" id="CHEBI:15378"/>
        <dbReference type="ChEBI" id="CHEBI:16389"/>
        <dbReference type="ChEBI" id="CHEBI:17976"/>
        <dbReference type="ChEBI" id="CHEBI:57540"/>
        <dbReference type="ChEBI" id="CHEBI:57945"/>
        <dbReference type="EC" id="7.1.1.2"/>
    </reaction>
</comment>
<comment type="subcellular location">
    <subcellularLocation>
        <location evidence="1">Mitochondrion inner membrane</location>
        <topology evidence="1">Multi-pass membrane protein</topology>
    </subcellularLocation>
</comment>
<comment type="similarity">
    <text evidence="3">Belongs to the complex I subunit 1 family.</text>
</comment>
<comment type="sequence caution" evidence="3">
    <conflict type="erroneous gene model prediction">
        <sequence resource="EMBL-CDS" id="AGG16007"/>
    </conflict>
</comment>
<protein>
    <recommendedName>
        <fullName>NADH-ubiquinone oxidoreductase chain 1</fullName>
        <ecNumber>7.1.1.2</ecNumber>
    </recommendedName>
    <alternativeName>
        <fullName>NADH dehydrogenase subunit 1</fullName>
    </alternativeName>
</protein>
<name>NU1M_NEUCR</name>